<feature type="chain" id="PRO_0000059436" description="Glycerol kinase">
    <location>
        <begin position="1"/>
        <end position="501"/>
    </location>
</feature>
<feature type="binding site" evidence="1">
    <location>
        <position position="11"/>
    </location>
    <ligand>
        <name>ADP</name>
        <dbReference type="ChEBI" id="CHEBI:456216"/>
    </ligand>
</feature>
<feature type="binding site" evidence="1">
    <location>
        <position position="11"/>
    </location>
    <ligand>
        <name>ATP</name>
        <dbReference type="ChEBI" id="CHEBI:30616"/>
    </ligand>
</feature>
<feature type="binding site" evidence="1">
    <location>
        <position position="11"/>
    </location>
    <ligand>
        <name>sn-glycerol 3-phosphate</name>
        <dbReference type="ChEBI" id="CHEBI:57597"/>
    </ligand>
</feature>
<feature type="binding site" evidence="1">
    <location>
        <position position="12"/>
    </location>
    <ligand>
        <name>ATP</name>
        <dbReference type="ChEBI" id="CHEBI:30616"/>
    </ligand>
</feature>
<feature type="binding site" evidence="1">
    <location>
        <position position="13"/>
    </location>
    <ligand>
        <name>ATP</name>
        <dbReference type="ChEBI" id="CHEBI:30616"/>
    </ligand>
</feature>
<feature type="binding site" evidence="1">
    <location>
        <position position="15"/>
    </location>
    <ligand>
        <name>ADP</name>
        <dbReference type="ChEBI" id="CHEBI:456216"/>
    </ligand>
</feature>
<feature type="binding site" evidence="1">
    <location>
        <position position="81"/>
    </location>
    <ligand>
        <name>glycerol</name>
        <dbReference type="ChEBI" id="CHEBI:17754"/>
    </ligand>
</feature>
<feature type="binding site" evidence="1">
    <location>
        <position position="81"/>
    </location>
    <ligand>
        <name>sn-glycerol 3-phosphate</name>
        <dbReference type="ChEBI" id="CHEBI:57597"/>
    </ligand>
</feature>
<feature type="binding site" evidence="1">
    <location>
        <position position="82"/>
    </location>
    <ligand>
        <name>glycerol</name>
        <dbReference type="ChEBI" id="CHEBI:17754"/>
    </ligand>
</feature>
<feature type="binding site" evidence="1">
    <location>
        <position position="82"/>
    </location>
    <ligand>
        <name>sn-glycerol 3-phosphate</name>
        <dbReference type="ChEBI" id="CHEBI:57597"/>
    </ligand>
</feature>
<feature type="binding site" evidence="1">
    <location>
        <position position="133"/>
    </location>
    <ligand>
        <name>glycerol</name>
        <dbReference type="ChEBI" id="CHEBI:17754"/>
    </ligand>
</feature>
<feature type="binding site" evidence="1">
    <location>
        <position position="133"/>
    </location>
    <ligand>
        <name>sn-glycerol 3-phosphate</name>
        <dbReference type="ChEBI" id="CHEBI:57597"/>
    </ligand>
</feature>
<feature type="binding site" evidence="1">
    <location>
        <position position="242"/>
    </location>
    <ligand>
        <name>glycerol</name>
        <dbReference type="ChEBI" id="CHEBI:17754"/>
    </ligand>
</feature>
<feature type="binding site" evidence="1">
    <location>
        <position position="242"/>
    </location>
    <ligand>
        <name>sn-glycerol 3-phosphate</name>
        <dbReference type="ChEBI" id="CHEBI:57597"/>
    </ligand>
</feature>
<feature type="binding site" evidence="1">
    <location>
        <position position="243"/>
    </location>
    <ligand>
        <name>glycerol</name>
        <dbReference type="ChEBI" id="CHEBI:17754"/>
    </ligand>
</feature>
<feature type="binding site" evidence="1">
    <location>
        <position position="264"/>
    </location>
    <ligand>
        <name>ADP</name>
        <dbReference type="ChEBI" id="CHEBI:456216"/>
    </ligand>
</feature>
<feature type="binding site" evidence="1">
    <location>
        <position position="264"/>
    </location>
    <ligand>
        <name>ATP</name>
        <dbReference type="ChEBI" id="CHEBI:30616"/>
    </ligand>
</feature>
<feature type="binding site" evidence="1">
    <location>
        <position position="307"/>
    </location>
    <ligand>
        <name>ADP</name>
        <dbReference type="ChEBI" id="CHEBI:456216"/>
    </ligand>
</feature>
<feature type="binding site" evidence="1">
    <location>
        <position position="307"/>
    </location>
    <ligand>
        <name>ATP</name>
        <dbReference type="ChEBI" id="CHEBI:30616"/>
    </ligand>
</feature>
<feature type="binding site" evidence="1">
    <location>
        <position position="311"/>
    </location>
    <ligand>
        <name>ATP</name>
        <dbReference type="ChEBI" id="CHEBI:30616"/>
    </ligand>
</feature>
<feature type="binding site" evidence="1">
    <location>
        <position position="409"/>
    </location>
    <ligand>
        <name>ADP</name>
        <dbReference type="ChEBI" id="CHEBI:456216"/>
    </ligand>
</feature>
<feature type="binding site" evidence="1">
    <location>
        <position position="409"/>
    </location>
    <ligand>
        <name>ATP</name>
        <dbReference type="ChEBI" id="CHEBI:30616"/>
    </ligand>
</feature>
<feature type="binding site" evidence="1">
    <location>
        <position position="413"/>
    </location>
    <ligand>
        <name>ADP</name>
        <dbReference type="ChEBI" id="CHEBI:456216"/>
    </ligand>
</feature>
<name>GLPK_BORBU</name>
<dbReference type="EC" id="2.7.1.30" evidence="1"/>
<dbReference type="EMBL" id="AE000783">
    <property type="protein sequence ID" value="AAC66628.1"/>
    <property type="molecule type" value="Genomic_DNA"/>
</dbReference>
<dbReference type="PIR" id="A70130">
    <property type="entry name" value="A70130"/>
</dbReference>
<dbReference type="RefSeq" id="NP_212375.1">
    <property type="nucleotide sequence ID" value="NC_001318.1"/>
</dbReference>
<dbReference type="RefSeq" id="WP_002656192.1">
    <property type="nucleotide sequence ID" value="NC_001318.1"/>
</dbReference>
<dbReference type="SMR" id="O51257"/>
<dbReference type="STRING" id="224326.BB_0241"/>
<dbReference type="PaxDb" id="224326-BB_0241"/>
<dbReference type="EnsemblBacteria" id="AAC66628">
    <property type="protein sequence ID" value="AAC66628"/>
    <property type="gene ID" value="BB_0241"/>
</dbReference>
<dbReference type="GeneID" id="56567671"/>
<dbReference type="KEGG" id="bbu:BB_0241"/>
<dbReference type="PATRIC" id="fig|224326.49.peg.640"/>
<dbReference type="HOGENOM" id="CLU_009281_2_3_12"/>
<dbReference type="OrthoDB" id="9805576at2"/>
<dbReference type="UniPathway" id="UPA00618">
    <property type="reaction ID" value="UER00672"/>
</dbReference>
<dbReference type="Proteomes" id="UP000001807">
    <property type="component" value="Chromosome"/>
</dbReference>
<dbReference type="GO" id="GO:0005829">
    <property type="term" value="C:cytosol"/>
    <property type="evidence" value="ECO:0000314"/>
    <property type="project" value="CAFA"/>
</dbReference>
<dbReference type="GO" id="GO:0005524">
    <property type="term" value="F:ATP binding"/>
    <property type="evidence" value="ECO:0007669"/>
    <property type="project" value="UniProtKB-UniRule"/>
</dbReference>
<dbReference type="GO" id="GO:0004370">
    <property type="term" value="F:glycerol kinase activity"/>
    <property type="evidence" value="ECO:0000250"/>
    <property type="project" value="UniProtKB"/>
</dbReference>
<dbReference type="GO" id="GO:0019563">
    <property type="term" value="P:glycerol catabolic process"/>
    <property type="evidence" value="ECO:0007669"/>
    <property type="project" value="UniProtKB-UniRule"/>
</dbReference>
<dbReference type="GO" id="GO:0006071">
    <property type="term" value="P:glycerol metabolic process"/>
    <property type="evidence" value="ECO:0000250"/>
    <property type="project" value="UniProtKB"/>
</dbReference>
<dbReference type="GO" id="GO:0006072">
    <property type="term" value="P:glycerol-3-phosphate metabolic process"/>
    <property type="evidence" value="ECO:0007669"/>
    <property type="project" value="InterPro"/>
</dbReference>
<dbReference type="CDD" id="cd07786">
    <property type="entry name" value="FGGY_EcGK_like"/>
    <property type="match status" value="1"/>
</dbReference>
<dbReference type="FunFam" id="3.30.420.40:FF:000007">
    <property type="entry name" value="Glycerol kinase"/>
    <property type="match status" value="1"/>
</dbReference>
<dbReference type="FunFam" id="3.30.420.40:FF:000008">
    <property type="entry name" value="Glycerol kinase"/>
    <property type="match status" value="1"/>
</dbReference>
<dbReference type="Gene3D" id="3.30.420.40">
    <property type="match status" value="2"/>
</dbReference>
<dbReference type="HAMAP" id="MF_00186">
    <property type="entry name" value="Glycerol_kin"/>
    <property type="match status" value="1"/>
</dbReference>
<dbReference type="InterPro" id="IPR043129">
    <property type="entry name" value="ATPase_NBD"/>
</dbReference>
<dbReference type="InterPro" id="IPR000577">
    <property type="entry name" value="Carb_kinase_FGGY"/>
</dbReference>
<dbReference type="InterPro" id="IPR018483">
    <property type="entry name" value="Carb_kinase_FGGY_CS"/>
</dbReference>
<dbReference type="InterPro" id="IPR018485">
    <property type="entry name" value="FGGY_C"/>
</dbReference>
<dbReference type="InterPro" id="IPR018484">
    <property type="entry name" value="FGGY_N"/>
</dbReference>
<dbReference type="InterPro" id="IPR005999">
    <property type="entry name" value="Glycerol_kin"/>
</dbReference>
<dbReference type="NCBIfam" id="TIGR01311">
    <property type="entry name" value="glycerol_kin"/>
    <property type="match status" value="1"/>
</dbReference>
<dbReference type="NCBIfam" id="NF000756">
    <property type="entry name" value="PRK00047.1"/>
    <property type="match status" value="1"/>
</dbReference>
<dbReference type="PANTHER" id="PTHR10196:SF69">
    <property type="entry name" value="GLYCEROL KINASE"/>
    <property type="match status" value="1"/>
</dbReference>
<dbReference type="PANTHER" id="PTHR10196">
    <property type="entry name" value="SUGAR KINASE"/>
    <property type="match status" value="1"/>
</dbReference>
<dbReference type="Pfam" id="PF02782">
    <property type="entry name" value="FGGY_C"/>
    <property type="match status" value="1"/>
</dbReference>
<dbReference type="Pfam" id="PF00370">
    <property type="entry name" value="FGGY_N"/>
    <property type="match status" value="1"/>
</dbReference>
<dbReference type="PIRSF" id="PIRSF000538">
    <property type="entry name" value="GlpK"/>
    <property type="match status" value="1"/>
</dbReference>
<dbReference type="SUPFAM" id="SSF53067">
    <property type="entry name" value="Actin-like ATPase domain"/>
    <property type="match status" value="2"/>
</dbReference>
<dbReference type="PROSITE" id="PS00933">
    <property type="entry name" value="FGGY_KINASES_1"/>
    <property type="match status" value="1"/>
</dbReference>
<dbReference type="PROSITE" id="PS00445">
    <property type="entry name" value="FGGY_KINASES_2"/>
    <property type="match status" value="1"/>
</dbReference>
<gene>
    <name evidence="1" type="primary">glpK</name>
    <name type="ordered locus">BB_0241</name>
</gene>
<evidence type="ECO:0000255" key="1">
    <source>
        <dbReference type="HAMAP-Rule" id="MF_00186"/>
    </source>
</evidence>
<accession>O51257</accession>
<keyword id="KW-0067">ATP-binding</keyword>
<keyword id="KW-0319">Glycerol metabolism</keyword>
<keyword id="KW-0418">Kinase</keyword>
<keyword id="KW-0547">Nucleotide-binding</keyword>
<keyword id="KW-1185">Reference proteome</keyword>
<keyword id="KW-0808">Transferase</keyword>
<sequence>MKYILSIDQGTTSSRAMVFDKNANIKGFAQKEFTQIYPQPSWVEHDPTEIWGSQLGVITEAMANARILPNEIDAIGITNQRETTVIWEKNTGKPIYNAIVWQDRRTAKICDQLKKEGKDKIILEKTGLVLDSYFSGTKIMWILDNVEGARQRAENGELCFGTIDTWILWNLTQKKEHATDYSNASRTLLLNIKTLEWDDELLSILNVPRAILPELKESSTIYGKTDKALFGAEIPIAGIAGDQFAATFGQACLKKGMAKNTYGTGCFLTVNIGKEPIISHDKLLTSIAWGRKKSVTYVLEGSVFIGGAVIQWLRDGLEFFRKSSDAEALASSVSDNGGVYFVPAFVGLGAPHWDSYARGTIIGITRGSTKAHITRAALESIAFQSFDILNTMKKSIPNFEIQELRVDGGASQNNLLMQFQADLLECKVVRPKITETTALGAAYLAGLATGYWQSAEEIVSLWQVDKIFEPSMPKNQKEKLLENWNKAVGKAKSWIQNSHSS</sequence>
<proteinExistence type="inferred from homology"/>
<organism>
    <name type="scientific">Borreliella burgdorferi (strain ATCC 35210 / DSM 4680 / CIP 102532 / B31)</name>
    <name type="common">Borrelia burgdorferi</name>
    <dbReference type="NCBI Taxonomy" id="224326"/>
    <lineage>
        <taxon>Bacteria</taxon>
        <taxon>Pseudomonadati</taxon>
        <taxon>Spirochaetota</taxon>
        <taxon>Spirochaetia</taxon>
        <taxon>Spirochaetales</taxon>
        <taxon>Borreliaceae</taxon>
        <taxon>Borreliella</taxon>
    </lineage>
</organism>
<reference key="1">
    <citation type="journal article" date="1997" name="Nature">
        <title>Genomic sequence of a Lyme disease spirochaete, Borrelia burgdorferi.</title>
        <authorList>
            <person name="Fraser C.M."/>
            <person name="Casjens S."/>
            <person name="Huang W.M."/>
            <person name="Sutton G.G."/>
            <person name="Clayton R.A."/>
            <person name="Lathigra R."/>
            <person name="White O."/>
            <person name="Ketchum K.A."/>
            <person name="Dodson R.J."/>
            <person name="Hickey E.K."/>
            <person name="Gwinn M.L."/>
            <person name="Dougherty B.A."/>
            <person name="Tomb J.-F."/>
            <person name="Fleischmann R.D."/>
            <person name="Richardson D.L."/>
            <person name="Peterson J.D."/>
            <person name="Kerlavage A.R."/>
            <person name="Quackenbush J."/>
            <person name="Salzberg S.L."/>
            <person name="Hanson M."/>
            <person name="van Vugt R."/>
            <person name="Palmer N."/>
            <person name="Adams M.D."/>
            <person name="Gocayne J.D."/>
            <person name="Weidman J.F."/>
            <person name="Utterback T.R."/>
            <person name="Watthey L."/>
            <person name="McDonald L.A."/>
            <person name="Artiach P."/>
            <person name="Bowman C."/>
            <person name="Garland S.A."/>
            <person name="Fujii C."/>
            <person name="Cotton M.D."/>
            <person name="Horst K."/>
            <person name="Roberts K.M."/>
            <person name="Hatch B."/>
            <person name="Smith H.O."/>
            <person name="Venter J.C."/>
        </authorList>
    </citation>
    <scope>NUCLEOTIDE SEQUENCE [LARGE SCALE GENOMIC DNA]</scope>
    <source>
        <strain>ATCC 35210 / DSM 4680 / CIP 102532 / B31</strain>
    </source>
</reference>
<comment type="function">
    <text evidence="1">Key enzyme in the regulation of glycerol uptake and metabolism. Catalyzes the phosphorylation of glycerol to yield sn-glycerol 3-phosphate.</text>
</comment>
<comment type="catalytic activity">
    <reaction evidence="1">
        <text>glycerol + ATP = sn-glycerol 3-phosphate + ADP + H(+)</text>
        <dbReference type="Rhea" id="RHEA:21644"/>
        <dbReference type="ChEBI" id="CHEBI:15378"/>
        <dbReference type="ChEBI" id="CHEBI:17754"/>
        <dbReference type="ChEBI" id="CHEBI:30616"/>
        <dbReference type="ChEBI" id="CHEBI:57597"/>
        <dbReference type="ChEBI" id="CHEBI:456216"/>
        <dbReference type="EC" id="2.7.1.30"/>
    </reaction>
</comment>
<comment type="activity regulation">
    <text evidence="1">Inhibited by fructose 1,6-bisphosphate (FBP).</text>
</comment>
<comment type="pathway">
    <text evidence="1">Polyol metabolism; glycerol degradation via glycerol kinase pathway; sn-glycerol 3-phosphate from glycerol: step 1/1.</text>
</comment>
<comment type="similarity">
    <text evidence="1">Belongs to the FGGY kinase family.</text>
</comment>
<protein>
    <recommendedName>
        <fullName evidence="1">Glycerol kinase</fullName>
        <ecNumber evidence="1">2.7.1.30</ecNumber>
    </recommendedName>
    <alternativeName>
        <fullName evidence="1">ATP:glycerol 3-phosphotransferase</fullName>
    </alternativeName>
    <alternativeName>
        <fullName evidence="1">Glycerokinase</fullName>
        <shortName evidence="1">GK</shortName>
    </alternativeName>
</protein>